<proteinExistence type="evidence at protein level"/>
<name>ATP7_PICAN</name>
<gene>
    <name evidence="1" type="primary">ATP7</name>
</gene>
<feature type="initiator methionine" description="Removed" evidence="3">
    <location>
        <position position="1"/>
    </location>
</feature>
<feature type="chain" id="PRO_0000445307" description="ATP synthase subunit d, mitochondrial" evidence="5">
    <location>
        <begin position="2"/>
        <end position="175"/>
    </location>
</feature>
<feature type="modified residue" description="N-acetylserine" evidence="3">
    <location>
        <position position="2"/>
    </location>
</feature>
<keyword id="KW-0002">3D-structure</keyword>
<keyword id="KW-0007">Acetylation</keyword>
<keyword id="KW-0066">ATP synthesis</keyword>
<keyword id="KW-0138">CF(0)</keyword>
<keyword id="KW-0903">Direct protein sequencing</keyword>
<keyword id="KW-0375">Hydrogen ion transport</keyword>
<keyword id="KW-0406">Ion transport</keyword>
<keyword id="KW-0472">Membrane</keyword>
<keyword id="KW-0496">Mitochondrion</keyword>
<keyword id="KW-0999">Mitochondrion inner membrane</keyword>
<keyword id="KW-0813">Transport</keyword>
<protein>
    <recommendedName>
        <fullName evidence="1">ATP synthase subunit d, mitochondrial</fullName>
    </recommendedName>
</protein>
<comment type="function">
    <text evidence="2 3 4">Mitochondrial membrane ATP synthase (F(1)F(0) ATP synthase or Complex V) produces ATP from ADP in the presence of a proton gradient across the membrane which is generated by electron transport complexes of the respiratory chain (PubMed:25759169). F-type ATP synthases consist of two structural domains, F(1) - containing the extramembraneous catalytic core, and F(0) - containing the membrane proton channel, linked together by a central stalk and a peripheral stalk (PubMed:27791192). During catalysis, ATP synthesis in the catalytic domain of F(1) is coupled via a rotary mechanism of the central stalk subunits to proton translocation (By similarity). Part of the complex F(0) domain and the peripheral stalk, which acts as a stator to hold the catalytic alpha/ATP1(3)beta/ATP2(3) subcomplex and subunit a/ATP6 static relative to the rotary elements (PubMed:27791192).</text>
</comment>
<comment type="subunit">
    <text evidence="2 3 4">F-type ATP synthases have 2 components, the catalytic core F(1) and the membrane-embedded component F(0), linked together by a central stalk and a peripheral stalk (PubMed:27791192). The central stalk, also called rotor shaft, is often seen as part of F(1) (PubMed:27791192). The peripheral stalk is seen as part of F(0). F(0) contains the membrane channel next to the rotor (PubMed:27791192). F-type ATP synthases form dimers but each monomer functions independently in ATP generation (By similarity). The dimer consists of 18 different polypeptides: ATP1 (subunit alpha, part of F(1), 3 molecules per monomer), ATP2 (subunit beta, part of F(1), 3 molecules per monomer), ATP3 (subunit gamma, part of the central stalk), ATP4 (subunit b, part of the peripheral stalk), ATP5/OSCP (subunit 5/OSCP, part of the peripheral stalk), ATP6 (subunit a, part of the peripheral stalk), ATP7 (subunit d, part of the peripheral stalk), ATP8 (subunit 8, part of the peripheral stalk), OLI1 (subunit c, part of the rotor, 10 molecules per monomer), ATP14 (subunit h, part of the peripheral stalk), ATP15 (subunit epsilon, part of the central stalk), ATP16 (subunit delta, part of the central stalk), ATP17 (subunit f, part of the peripheral stalk), ATP18 (subunit i/j, part of the peripheral stalk) (PubMed:25759169, PubMed:27791192). Dimer-specific subunits are ATP19 (subunit k, at interface between monomers), ATP20 (subunit g, at interface between monomers), TIM11 (subunit e, at interface between monomers) (By similarity). Also contains subunit L (PubMed:25759169).</text>
</comment>
<comment type="subcellular location">
    <subcellularLocation>
        <location evidence="9">Mitochondrion inner membrane</location>
        <topology evidence="9">Peripheral membrane protein</topology>
        <orientation evidence="9">Matrix side</orientation>
    </subcellularLocation>
    <text evidence="9">The F-type ATP synthase complex is anchored in the mitochondrial inner membrane via the F(0) domain with the F(1) domain and the peripheral stalk extending into the mitochondrial matrix.</text>
</comment>
<comment type="mass spectrometry"/>
<comment type="similarity">
    <text evidence="8">Belongs to the ATPase d subunit family.</text>
</comment>
<organism evidence="6">
    <name type="scientific">Pichia angusta</name>
    <name type="common">Yeast</name>
    <name type="synonym">Hansenula polymorpha</name>
    <dbReference type="NCBI Taxonomy" id="870730"/>
    <lineage>
        <taxon>Eukaryota</taxon>
        <taxon>Fungi</taxon>
        <taxon>Dikarya</taxon>
        <taxon>Ascomycota</taxon>
        <taxon>Saccharomycotina</taxon>
        <taxon>Pichiomycetes</taxon>
        <taxon>Pichiales</taxon>
        <taxon>Pichiaceae</taxon>
        <taxon>Ogataea</taxon>
    </lineage>
</organism>
<evidence type="ECO:0000250" key="1">
    <source>
        <dbReference type="UniProtKB" id="P30902"/>
    </source>
</evidence>
<evidence type="ECO:0000250" key="2">
    <source>
        <dbReference type="UniProtKB" id="Q6CFH9"/>
    </source>
</evidence>
<evidence type="ECO:0000269" key="3">
    <source>
    </source>
</evidence>
<evidence type="ECO:0000269" key="4">
    <source>
    </source>
</evidence>
<evidence type="ECO:0000269" key="5">
    <source ref="2"/>
</evidence>
<evidence type="ECO:0000303" key="6">
    <source>
    </source>
</evidence>
<evidence type="ECO:0000303" key="7">
    <source ref="2"/>
</evidence>
<evidence type="ECO:0000305" key="8"/>
<evidence type="ECO:0000305" key="9">
    <source>
    </source>
</evidence>
<evidence type="ECO:0007744" key="10">
    <source>
        <dbReference type="PDB" id="5LQX"/>
    </source>
</evidence>
<evidence type="ECO:0007744" key="11">
    <source>
        <dbReference type="PDB" id="5LQY"/>
    </source>
</evidence>
<evidence type="ECO:0007744" key="12">
    <source>
        <dbReference type="PDB" id="5LQZ"/>
    </source>
</evidence>
<reference evidence="8" key="1">
    <citation type="journal article" date="2015" name="Biochem. J.">
        <title>The purification and characterization of ATP synthase complexes from the mitochondria of four fungal species.</title>
        <authorList>
            <person name="Liu S."/>
            <person name="Charlesworth T.J."/>
            <person name="Bason J.V."/>
            <person name="Montgomery M.G."/>
            <person name="Harbour M.E."/>
            <person name="Fearnley I.M."/>
            <person name="Walker J.E."/>
        </authorList>
    </citation>
    <scope>NUCLEOTIDE SEQUENCE [GENOMIC DNA]</scope>
    <scope>PROTEIN SEQUENCE OF 2-11</scope>
    <scope>IDENTIFICATION IN ATP SYNTHASE COMPLEX</scope>
    <scope>FUNCTION OF ATPASE COMPLEX</scope>
    <scope>SUBUNIT</scope>
    <scope>SUBCELLULAR LOCATION</scope>
    <scope>MASS SPECTROMETRY</scope>
    <scope>IDENTIFICATION BY MASS SPECTROMETRY</scope>
    <scope>ACETYLATION AT SER-2</scope>
    <source>
        <strain evidence="6">A16 / NCYC 2310</strain>
    </source>
</reference>
<reference evidence="8" key="2">
    <citation type="submission" date="2016-08" db="UniProtKB">
        <authorList>
            <person name="Fearnley I.M."/>
        </authorList>
    </citation>
    <scope>PARTIAL PROTEIN SEQUENCE</scope>
    <source>
        <strain evidence="7">A16 / NCYC 2310</strain>
    </source>
</reference>
<reference evidence="10 11 12" key="3">
    <citation type="journal article" date="2016" name="Proc. Natl. Acad. Sci. U.S.A.">
        <title>Structure of the mitochondrial ATP synthase from Pichia angusta determined by electron cryo-microscopy.</title>
        <authorList>
            <person name="Vinothkumar K.R."/>
            <person name="Montgomery M.G."/>
            <person name="Liu S."/>
            <person name="Walker J.E."/>
        </authorList>
    </citation>
    <scope>STRUCTURE BY ELECTRON MICROSCOPY (7.0 ANGSTROMS) OF MONOMERIC ATP SYNTHASE COMPLEX IN COMPLEX WITH BOVINE ATPIF1</scope>
    <scope>FUNCTION</scope>
    <scope>SUBUNIT</scope>
    <scope>SUBCELLULAR LOCATION</scope>
</reference>
<sequence>MSSVAKSTANKLDWTKIVSKLGLSGQTAAALTSFKKRNDEAKRILFELKQQPSNVDFAFYKSTLKNTAIVDKIQSDVSKFTPSKANLSKQLNLIESFEAKALENAKETESVVLAELTDLEKTLENIESARPFDQLTVDDVVKARPDVEEKVQDMVSKGRFEVPGYKEKFGDLVIM</sequence>
<dbReference type="PDB" id="5LQX">
    <property type="method" value="EM"/>
    <property type="resolution" value="7.90 A"/>
    <property type="chains" value="W=2-128"/>
</dbReference>
<dbReference type="PDB" id="5LQY">
    <property type="method" value="EM"/>
    <property type="resolution" value="7.80 A"/>
    <property type="chains" value="W=2-128"/>
</dbReference>
<dbReference type="PDB" id="5LQZ">
    <property type="method" value="EM"/>
    <property type="resolution" value="7.00 A"/>
    <property type="chains" value="W=2-128"/>
</dbReference>
<dbReference type="PDBsum" id="5LQX"/>
<dbReference type="PDBsum" id="5LQY"/>
<dbReference type="PDBsum" id="5LQZ"/>
<dbReference type="EMDB" id="EMD-4100"/>
<dbReference type="EMDB" id="EMD-4101"/>
<dbReference type="EMDB" id="EMD-4102"/>
<dbReference type="SMR" id="C0HK60"/>
<dbReference type="iPTMnet" id="C0HK60"/>
<dbReference type="GO" id="GO:0005743">
    <property type="term" value="C:mitochondrial inner membrane"/>
    <property type="evidence" value="ECO:0007669"/>
    <property type="project" value="UniProtKB-SubCell"/>
</dbReference>
<dbReference type="GO" id="GO:0045259">
    <property type="term" value="C:proton-transporting ATP synthase complex"/>
    <property type="evidence" value="ECO:0007669"/>
    <property type="project" value="UniProtKB-KW"/>
</dbReference>
<dbReference type="GO" id="GO:0015078">
    <property type="term" value="F:proton transmembrane transporter activity"/>
    <property type="evidence" value="ECO:0007669"/>
    <property type="project" value="InterPro"/>
</dbReference>
<dbReference type="GO" id="GO:0015986">
    <property type="term" value="P:proton motive force-driven ATP synthesis"/>
    <property type="evidence" value="ECO:0007669"/>
    <property type="project" value="InterPro"/>
</dbReference>
<dbReference type="Gene3D" id="6.10.280.70">
    <property type="match status" value="1"/>
</dbReference>
<dbReference type="InterPro" id="IPR008689">
    <property type="entry name" value="ATP_synth_F0_dsu_mt"/>
</dbReference>
<dbReference type="InterPro" id="IPR036228">
    <property type="entry name" value="ATP_synth_F0_dsu_sf_mt"/>
</dbReference>
<dbReference type="PANTHER" id="PTHR12700">
    <property type="entry name" value="ATP SYNTHASE SUBUNIT D, MITOCHONDRIAL"/>
    <property type="match status" value="1"/>
</dbReference>
<dbReference type="Pfam" id="PF05873">
    <property type="entry name" value="Mt_ATP-synt_D"/>
    <property type="match status" value="1"/>
</dbReference>
<dbReference type="PIRSF" id="PIRSF005514">
    <property type="entry name" value="ATPase_F0_D_mt"/>
    <property type="match status" value="1"/>
</dbReference>
<dbReference type="SUPFAM" id="SSF161065">
    <property type="entry name" value="ATP synthase D chain-like"/>
    <property type="match status" value="1"/>
</dbReference>
<accession>C0HK60</accession>